<organism>
    <name type="scientific">Nostoc sp. (strain PCC 7120 / SAG 25.82 / UTEX 2576)</name>
    <dbReference type="NCBI Taxonomy" id="103690"/>
    <lineage>
        <taxon>Bacteria</taxon>
        <taxon>Bacillati</taxon>
        <taxon>Cyanobacteriota</taxon>
        <taxon>Cyanophyceae</taxon>
        <taxon>Nostocales</taxon>
        <taxon>Nostocaceae</taxon>
        <taxon>Nostoc</taxon>
    </lineage>
</organism>
<name>CLPB2_NOSS1</name>
<gene>
    <name type="primary">clpB2</name>
    <name type="ordered locus">alr5084</name>
</gene>
<comment type="function">
    <text evidence="1">Part of a stress-induced multi-chaperone system, it is involved in the recovery of the cell from heat-induced damage, in cooperation with DnaK, DnaJ and GrpE. Acts before DnaK, in the processing of protein aggregates. Protein binding stimulates the ATPase activity; ATP hydrolysis unfolds the denatured protein aggregates, which probably helps expose new hydrophobic binding sites on the surface of ClpB-bound aggregates, contributing to the solubilization and refolding of denatured protein aggregates by DnaK (By similarity).</text>
</comment>
<comment type="subunit">
    <text evidence="1">Homohexamer. The oligomerization is ATP-dependent (By similarity).</text>
</comment>
<comment type="subcellular location">
    <subcellularLocation>
        <location evidence="3">Cytoplasm</location>
    </subcellularLocation>
</comment>
<comment type="domain">
    <text evidence="1">The Clp repeat (R) domain probably functions as a substrate-discriminating domain, recruiting aggregated proteins to the ClpB hexamer and/or stabilizing bound proteins. The NBD2 domain is responsible for oligomerization, whereas the NBD1 domain stabilizes the hexamer probably in an ATP-dependent manner. The movement of the coiled-coil domain is essential for ClpB ability to rescue proteins from an aggregated state, probably by pulling apart large aggregated proteins, which are bound between the coiled-coils motifs of adjacent ClpB subunits in the functional hexamer (By similarity).</text>
</comment>
<comment type="similarity">
    <text evidence="3">Belongs to the ClpA/ClpB family.</text>
</comment>
<comment type="sequence caution" evidence="3">
    <conflict type="erroneous initiation">
        <sequence resource="EMBL-CDS" id="BAB76783"/>
    </conflict>
</comment>
<proteinExistence type="inferred from homology"/>
<dbReference type="EMBL" id="BA000019">
    <property type="protein sequence ID" value="BAB76783.1"/>
    <property type="status" value="ALT_INIT"/>
    <property type="molecule type" value="Genomic_DNA"/>
</dbReference>
<dbReference type="PIR" id="AD2441">
    <property type="entry name" value="AD2441"/>
</dbReference>
<dbReference type="SMR" id="Q8YM56"/>
<dbReference type="STRING" id="103690.gene:10497142"/>
<dbReference type="KEGG" id="ana:alr5084"/>
<dbReference type="eggNOG" id="COG0542">
    <property type="taxonomic scope" value="Bacteria"/>
</dbReference>
<dbReference type="OrthoDB" id="438311at2"/>
<dbReference type="Proteomes" id="UP000002483">
    <property type="component" value="Chromosome"/>
</dbReference>
<dbReference type="GO" id="GO:0005737">
    <property type="term" value="C:cytoplasm"/>
    <property type="evidence" value="ECO:0007669"/>
    <property type="project" value="UniProtKB-SubCell"/>
</dbReference>
<dbReference type="GO" id="GO:0005524">
    <property type="term" value="F:ATP binding"/>
    <property type="evidence" value="ECO:0007669"/>
    <property type="project" value="UniProtKB-KW"/>
</dbReference>
<dbReference type="GO" id="GO:0016887">
    <property type="term" value="F:ATP hydrolysis activity"/>
    <property type="evidence" value="ECO:0007669"/>
    <property type="project" value="InterPro"/>
</dbReference>
<dbReference type="GO" id="GO:0034605">
    <property type="term" value="P:cellular response to heat"/>
    <property type="evidence" value="ECO:0007669"/>
    <property type="project" value="TreeGrafter"/>
</dbReference>
<dbReference type="GO" id="GO:0042026">
    <property type="term" value="P:protein refolding"/>
    <property type="evidence" value="ECO:0007669"/>
    <property type="project" value="InterPro"/>
</dbReference>
<dbReference type="CDD" id="cd00009">
    <property type="entry name" value="AAA"/>
    <property type="match status" value="1"/>
</dbReference>
<dbReference type="CDD" id="cd19499">
    <property type="entry name" value="RecA-like_ClpB_Hsp104-like"/>
    <property type="match status" value="1"/>
</dbReference>
<dbReference type="FunFam" id="1.10.8.60:FF:000017">
    <property type="entry name" value="ATP-dependent chaperone ClpB"/>
    <property type="match status" value="1"/>
</dbReference>
<dbReference type="FunFam" id="3.40.50.300:FF:000120">
    <property type="entry name" value="ATP-dependent chaperone ClpB"/>
    <property type="match status" value="1"/>
</dbReference>
<dbReference type="FunFam" id="3.40.50.300:FF:000025">
    <property type="entry name" value="ATP-dependent Clp protease subunit"/>
    <property type="match status" value="1"/>
</dbReference>
<dbReference type="FunFam" id="3.40.50.300:FF:000010">
    <property type="entry name" value="Chaperone clpB 1, putative"/>
    <property type="match status" value="1"/>
</dbReference>
<dbReference type="Gene3D" id="1.10.8.60">
    <property type="match status" value="1"/>
</dbReference>
<dbReference type="Gene3D" id="1.10.1780.10">
    <property type="entry name" value="Clp, N-terminal domain"/>
    <property type="match status" value="1"/>
</dbReference>
<dbReference type="Gene3D" id="3.40.50.300">
    <property type="entry name" value="P-loop containing nucleotide triphosphate hydrolases"/>
    <property type="match status" value="3"/>
</dbReference>
<dbReference type="InterPro" id="IPR003593">
    <property type="entry name" value="AAA+_ATPase"/>
</dbReference>
<dbReference type="InterPro" id="IPR003959">
    <property type="entry name" value="ATPase_AAA_core"/>
</dbReference>
<dbReference type="InterPro" id="IPR017730">
    <property type="entry name" value="Chaperonin_ClpB"/>
</dbReference>
<dbReference type="InterPro" id="IPR019489">
    <property type="entry name" value="Clp_ATPase_C"/>
</dbReference>
<dbReference type="InterPro" id="IPR036628">
    <property type="entry name" value="Clp_N_dom_sf"/>
</dbReference>
<dbReference type="InterPro" id="IPR004176">
    <property type="entry name" value="Clp_R_dom"/>
</dbReference>
<dbReference type="InterPro" id="IPR001270">
    <property type="entry name" value="ClpA/B"/>
</dbReference>
<dbReference type="InterPro" id="IPR018368">
    <property type="entry name" value="ClpA/B_CS1"/>
</dbReference>
<dbReference type="InterPro" id="IPR028299">
    <property type="entry name" value="ClpA/B_CS2"/>
</dbReference>
<dbReference type="InterPro" id="IPR041546">
    <property type="entry name" value="ClpA/ClpB_AAA_lid"/>
</dbReference>
<dbReference type="InterPro" id="IPR050130">
    <property type="entry name" value="ClpA_ClpB"/>
</dbReference>
<dbReference type="InterPro" id="IPR027417">
    <property type="entry name" value="P-loop_NTPase"/>
</dbReference>
<dbReference type="NCBIfam" id="TIGR03346">
    <property type="entry name" value="chaperone_ClpB"/>
    <property type="match status" value="1"/>
</dbReference>
<dbReference type="PANTHER" id="PTHR11638">
    <property type="entry name" value="ATP-DEPENDENT CLP PROTEASE"/>
    <property type="match status" value="1"/>
</dbReference>
<dbReference type="PANTHER" id="PTHR11638:SF18">
    <property type="entry name" value="HEAT SHOCK PROTEIN 104"/>
    <property type="match status" value="1"/>
</dbReference>
<dbReference type="Pfam" id="PF00004">
    <property type="entry name" value="AAA"/>
    <property type="match status" value="1"/>
</dbReference>
<dbReference type="Pfam" id="PF07724">
    <property type="entry name" value="AAA_2"/>
    <property type="match status" value="1"/>
</dbReference>
<dbReference type="Pfam" id="PF17871">
    <property type="entry name" value="AAA_lid_9"/>
    <property type="match status" value="1"/>
</dbReference>
<dbReference type="Pfam" id="PF02861">
    <property type="entry name" value="Clp_N"/>
    <property type="match status" value="2"/>
</dbReference>
<dbReference type="Pfam" id="PF10431">
    <property type="entry name" value="ClpB_D2-small"/>
    <property type="match status" value="1"/>
</dbReference>
<dbReference type="PRINTS" id="PR00300">
    <property type="entry name" value="CLPPROTEASEA"/>
</dbReference>
<dbReference type="SMART" id="SM00382">
    <property type="entry name" value="AAA"/>
    <property type="match status" value="2"/>
</dbReference>
<dbReference type="SMART" id="SM01086">
    <property type="entry name" value="ClpB_D2-small"/>
    <property type="match status" value="1"/>
</dbReference>
<dbReference type="SUPFAM" id="SSF81923">
    <property type="entry name" value="Double Clp-N motif"/>
    <property type="match status" value="1"/>
</dbReference>
<dbReference type="SUPFAM" id="SSF52540">
    <property type="entry name" value="P-loop containing nucleoside triphosphate hydrolases"/>
    <property type="match status" value="2"/>
</dbReference>
<dbReference type="PROSITE" id="PS51903">
    <property type="entry name" value="CLP_R"/>
    <property type="match status" value="1"/>
</dbReference>
<dbReference type="PROSITE" id="PS00870">
    <property type="entry name" value="CLPAB_1"/>
    <property type="match status" value="1"/>
</dbReference>
<dbReference type="PROSITE" id="PS00871">
    <property type="entry name" value="CLPAB_2"/>
    <property type="match status" value="1"/>
</dbReference>
<protein>
    <recommendedName>
        <fullName>Chaperone protein ClpB 2</fullName>
    </recommendedName>
</protein>
<feature type="chain" id="PRO_0000191086" description="Chaperone protein ClpB 2">
    <location>
        <begin position="1"/>
        <end position="872"/>
    </location>
</feature>
<feature type="domain" description="Clp R" evidence="2">
    <location>
        <begin position="6"/>
        <end position="148"/>
    </location>
</feature>
<feature type="region of interest" description="Repeat 1" evidence="2">
    <location>
        <begin position="9"/>
        <end position="73"/>
    </location>
</feature>
<feature type="region of interest" description="Repeat 2" evidence="2">
    <location>
        <begin position="85"/>
        <end position="148"/>
    </location>
</feature>
<feature type="region of interest" description="NBD1" evidence="1">
    <location>
        <begin position="161"/>
        <end position="342"/>
    </location>
</feature>
<feature type="region of interest" description="Linker" evidence="1">
    <location>
        <begin position="343"/>
        <end position="551"/>
    </location>
</feature>
<feature type="region of interest" description="NBD2" evidence="1">
    <location>
        <begin position="561"/>
        <end position="772"/>
    </location>
</feature>
<feature type="region of interest" description="C-terminal" evidence="1">
    <location>
        <begin position="773"/>
        <end position="872"/>
    </location>
</feature>
<feature type="coiled-coil region" evidence="1">
    <location>
        <begin position="393"/>
        <end position="527"/>
    </location>
</feature>
<feature type="binding site" evidence="1">
    <location>
        <begin position="208"/>
        <end position="215"/>
    </location>
    <ligand>
        <name>ATP</name>
        <dbReference type="ChEBI" id="CHEBI:30616"/>
        <label>1</label>
    </ligand>
</feature>
<feature type="binding site" evidence="1">
    <location>
        <begin position="611"/>
        <end position="618"/>
    </location>
    <ligand>
        <name>ATP</name>
        <dbReference type="ChEBI" id="CHEBI:30616"/>
        <label>2</label>
    </ligand>
</feature>
<evidence type="ECO:0000250" key="1"/>
<evidence type="ECO:0000255" key="2">
    <source>
        <dbReference type="PROSITE-ProRule" id="PRU01251"/>
    </source>
</evidence>
<evidence type="ECO:0000305" key="3"/>
<reference key="1">
    <citation type="journal article" date="2001" name="DNA Res.">
        <title>Complete genomic sequence of the filamentous nitrogen-fixing cyanobacterium Anabaena sp. strain PCC 7120.</title>
        <authorList>
            <person name="Kaneko T."/>
            <person name="Nakamura Y."/>
            <person name="Wolk C.P."/>
            <person name="Kuritz T."/>
            <person name="Sasamoto S."/>
            <person name="Watanabe A."/>
            <person name="Iriguchi M."/>
            <person name="Ishikawa A."/>
            <person name="Kawashima K."/>
            <person name="Kimura T."/>
            <person name="Kishida Y."/>
            <person name="Kohara M."/>
            <person name="Matsumoto M."/>
            <person name="Matsuno A."/>
            <person name="Muraki A."/>
            <person name="Nakazaki N."/>
            <person name="Shimpo S."/>
            <person name="Sugimoto M."/>
            <person name="Takazawa M."/>
            <person name="Yamada M."/>
            <person name="Yasuda M."/>
            <person name="Tabata S."/>
        </authorList>
    </citation>
    <scope>NUCLEOTIDE SEQUENCE [LARGE SCALE GENOMIC DNA]</scope>
    <source>
        <strain>PCC 7120 / SAG 25.82 / UTEX 2576</strain>
    </source>
</reference>
<keyword id="KW-0067">ATP-binding</keyword>
<keyword id="KW-0143">Chaperone</keyword>
<keyword id="KW-0175">Coiled coil</keyword>
<keyword id="KW-0963">Cytoplasm</keyword>
<keyword id="KW-0547">Nucleotide-binding</keyword>
<keyword id="KW-1185">Reference proteome</keyword>
<keyword id="KW-0677">Repeat</keyword>
<keyword id="KW-0346">Stress response</keyword>
<sequence>MQPTNPNQFTEKAWEAIAHTPEIAKQHQQQQIESEHLMKALLEQDGLASGILTKAGVNLQKISDRTEQYIQRQPKVSGNSTSVYLGRSLDTLLDRAEAHRKDFQDEYISIEHLLLAYPKDDRFGKGLFQEFALDESKLKNIIKQVRGSQTVTDQNPEGKYQSLEKYGRDLTEAARKGQLDPVIGRDDEIRRTIQILSRRTKNNPVLIGEPGVGKTAIAEGLAQRIVAGDVPQSLKDRKLISLDMGAMIAGAKFRGEFEERLKAVLKEVTESGGNIVLFIDEIHTVVGAGATQGAMDAGNLLKPMLARGELRCIGATTLDEYRKYIEKDAALERRFQQVYVDQPSVEDTISILRGLKERYEVHHGVKISDSSLVAAATLSSRYISDRFLPDKAIDLVDEAAARLKMEITSKPEELDEIDRKILQLEMEKLSLQKESDAASRERLERLEKELADLKEEQRTLNTQWQSEKDVINKLQSVKEEIDKVNLEIQQAERNYDLNRAAELKYGNLTDLHRRLEATERELSQTQGTGKSLLREEVTEADIAEIISKWTGIPISKLVESEKEKLLHLEDELHHRVIGQDEAVTAVADAIQRSRAGLADPNRPTASFVFLGPTGVGKTELAKALASYMFDTEDALVRIDMSEYMEKHAVSRLIGAPPGYVGYEEGGQLTETIRRRPYAVILFDEIEKAHPDVFNIFLQILDDGRVTDAQGHTVDFKNTIIIMTSNIGSQYILDIAGDNSRYDEMRHRVMEAMRNSFRPEFLNRIDEVIIFHSLDKKELRQIVQLQVERLKARLDDRKISLRLSDVALDFLAEVGYDPVFGARPLKRAIQRELETQIAKAILRGEFNDGDTIFVDVQNERLSFSRLPVEVFSS</sequence>
<accession>Q8YM56</accession>